<protein>
    <recommendedName>
        <fullName evidence="12">Carboxylesterase Culp1</fullName>
        <ecNumber evidence="4 5 6 7">3.1.1.-</ecNumber>
    </recommendedName>
    <alternativeName>
        <fullName evidence="11">CFP21</fullName>
    </alternativeName>
    <alternativeName>
        <fullName evidence="10">Cutinase-like protein 1</fullName>
        <shortName evidence="10">Culp1</shortName>
    </alternativeName>
</protein>
<dbReference type="EC" id="3.1.1.-" evidence="4 5 6 7"/>
<dbReference type="EMBL" id="AL123456">
    <property type="protein sequence ID" value="CCP44754.1"/>
    <property type="molecule type" value="Genomic_DNA"/>
</dbReference>
<dbReference type="PIR" id="F70756">
    <property type="entry name" value="F70756"/>
</dbReference>
<dbReference type="SMR" id="P9WP43"/>
<dbReference type="STRING" id="83332.Rv1984c"/>
<dbReference type="SwissLipids" id="SLP:000001377"/>
<dbReference type="ESTHER" id="myctu-cutas1">
    <property type="family name" value="Cutinase"/>
</dbReference>
<dbReference type="PaxDb" id="83332-Rv1984c"/>
<dbReference type="DNASU" id="885813"/>
<dbReference type="KEGG" id="mtu:Rv1984c"/>
<dbReference type="KEGG" id="mtv:RVBD_1984c"/>
<dbReference type="TubercuList" id="Rv1984c"/>
<dbReference type="eggNOG" id="ENOG5030PZC">
    <property type="taxonomic scope" value="Bacteria"/>
</dbReference>
<dbReference type="InParanoid" id="P9WP43"/>
<dbReference type="OrthoDB" id="3690529at2"/>
<dbReference type="PhylomeDB" id="P9WP43"/>
<dbReference type="Proteomes" id="UP000001584">
    <property type="component" value="Chromosome"/>
</dbReference>
<dbReference type="GO" id="GO:0005576">
    <property type="term" value="C:extracellular region"/>
    <property type="evidence" value="ECO:0007005"/>
    <property type="project" value="MTBBASE"/>
</dbReference>
<dbReference type="GO" id="GO:0009274">
    <property type="term" value="C:peptidoglycan-based cell wall"/>
    <property type="evidence" value="ECO:0007005"/>
    <property type="project" value="MTBBASE"/>
</dbReference>
<dbReference type="GO" id="GO:0106435">
    <property type="term" value="F:carboxylesterase activity"/>
    <property type="evidence" value="ECO:0000314"/>
    <property type="project" value="UniProtKB"/>
</dbReference>
<dbReference type="GO" id="GO:0016298">
    <property type="term" value="F:lipase activity"/>
    <property type="evidence" value="ECO:0000318"/>
    <property type="project" value="GO_Central"/>
</dbReference>
<dbReference type="GO" id="GO:0047372">
    <property type="term" value="F:monoacylglycerol lipase activity"/>
    <property type="evidence" value="ECO:0000314"/>
    <property type="project" value="MTBBASE"/>
</dbReference>
<dbReference type="GO" id="GO:0034338">
    <property type="term" value="F:short-chain carboxylesterase activity"/>
    <property type="evidence" value="ECO:0000314"/>
    <property type="project" value="MTBBASE"/>
</dbReference>
<dbReference type="GO" id="GO:0016042">
    <property type="term" value="P:lipid catabolic process"/>
    <property type="evidence" value="ECO:0000318"/>
    <property type="project" value="GO_Central"/>
</dbReference>
<dbReference type="GO" id="GO:0051793">
    <property type="term" value="P:medium-chain fatty acid catabolic process"/>
    <property type="evidence" value="ECO:0000314"/>
    <property type="project" value="MTBBASE"/>
</dbReference>
<dbReference type="GO" id="GO:0052651">
    <property type="term" value="P:monoacylglycerol catabolic process"/>
    <property type="evidence" value="ECO:0000314"/>
    <property type="project" value="MTBBASE"/>
</dbReference>
<dbReference type="GO" id="GO:0019626">
    <property type="term" value="P:short-chain fatty acid catabolic process"/>
    <property type="evidence" value="ECO:0000314"/>
    <property type="project" value="MTBBASE"/>
</dbReference>
<dbReference type="Gene3D" id="3.40.50.1820">
    <property type="entry name" value="alpha/beta hydrolase"/>
    <property type="match status" value="1"/>
</dbReference>
<dbReference type="InterPro" id="IPR029058">
    <property type="entry name" value="AB_hydrolase_fold"/>
</dbReference>
<dbReference type="InterPro" id="IPR000675">
    <property type="entry name" value="Cutinase/axe"/>
</dbReference>
<dbReference type="InterPro" id="IPR043580">
    <property type="entry name" value="CUTINASE_1"/>
</dbReference>
<dbReference type="InterPro" id="IPR043579">
    <property type="entry name" value="CUTINASE_2"/>
</dbReference>
<dbReference type="PANTHER" id="PTHR33630:SF9">
    <property type="entry name" value="CUTINASE 4"/>
    <property type="match status" value="1"/>
</dbReference>
<dbReference type="PANTHER" id="PTHR33630">
    <property type="entry name" value="CUTINASE RV1984C-RELATED-RELATED"/>
    <property type="match status" value="1"/>
</dbReference>
<dbReference type="Pfam" id="PF01083">
    <property type="entry name" value="Cutinase"/>
    <property type="match status" value="1"/>
</dbReference>
<dbReference type="SMART" id="SM01110">
    <property type="entry name" value="Cutinase"/>
    <property type="match status" value="1"/>
</dbReference>
<dbReference type="SUPFAM" id="SSF53474">
    <property type="entry name" value="alpha/beta-Hydrolases"/>
    <property type="match status" value="1"/>
</dbReference>
<dbReference type="PROSITE" id="PS00155">
    <property type="entry name" value="CUTINASE_1"/>
    <property type="match status" value="1"/>
</dbReference>
<dbReference type="PROSITE" id="PS00931">
    <property type="entry name" value="CUTINASE_2"/>
    <property type="match status" value="1"/>
</dbReference>
<name>CULP1_MYCTU</name>
<gene>
    <name type="primary">cut7</name>
    <name type="ordered locus">Rv1984c</name>
    <name type="ORF">MTCY39.35</name>
</gene>
<comment type="function">
    <text evidence="4 5 6 7">Shows esterase activity, with a preference for short- and medium-chain fatty acids (PubMed:16716602, PubMed:19225166, PubMed:20103719, PubMed:23843969). Also has weak lipase activity, but does not exhibit cutinase activity (PubMed:19225166, PubMed:23843969). Hydrolyzes various p-nitrophenol-linked aliphatic esters, including pNP-butyrate (C4), pNP-valerate (C5), pNP-hexanoate (C6), pNP-octanoate (C8) and pNP-decanoate (C10) (PubMed:16716602, PubMed:19225166, PubMed:20103719). Can use pNP-laurate (C12) and pNP-myristate (C14), with lower efficiency (PubMed:19225166). Can also hydrolyze monocaprylin and triolein, with a slow turnover (PubMed:20103719).</text>
</comment>
<comment type="function">
    <text evidence="3 4 9">Induces a strong delayed-type hypersensitivity (DTH) response in animal model of tuberculosis, cellular and humoral immune responses (PubMed:10076913, PubMed:16716602, PubMed:9673225). Induces interferon-gamma (IFN-gamma) release in animal models and in human TB patients (PubMed:10076913, PubMed:16716602, PubMed:9673225). Also induces IL-12 responses in mouse model (PubMed:16716602).</text>
</comment>
<comment type="catalytic activity">
    <reaction evidence="4 5 6 7">
        <text>a fatty acid ester + H2O = an aliphatic alcohol + a fatty acid + H(+)</text>
        <dbReference type="Rhea" id="RHEA:59388"/>
        <dbReference type="ChEBI" id="CHEBI:2571"/>
        <dbReference type="ChEBI" id="CHEBI:15377"/>
        <dbReference type="ChEBI" id="CHEBI:15378"/>
        <dbReference type="ChEBI" id="CHEBI:28868"/>
        <dbReference type="ChEBI" id="CHEBI:35748"/>
    </reaction>
    <physiologicalReaction direction="left-to-right" evidence="4 5 6 7">
        <dbReference type="Rhea" id="RHEA:59389"/>
    </physiologicalReaction>
</comment>
<comment type="catalytic activity">
    <reaction evidence="4 5 6">
        <text>a butanoate ester + H2O = an aliphatic alcohol + butanoate + H(+)</text>
        <dbReference type="Rhea" id="RHEA:47348"/>
        <dbReference type="ChEBI" id="CHEBI:2571"/>
        <dbReference type="ChEBI" id="CHEBI:15377"/>
        <dbReference type="ChEBI" id="CHEBI:15378"/>
        <dbReference type="ChEBI" id="CHEBI:17968"/>
        <dbReference type="ChEBI" id="CHEBI:50477"/>
    </reaction>
    <physiologicalReaction direction="left-to-right" evidence="4 5 6">
        <dbReference type="Rhea" id="RHEA:47349"/>
    </physiologicalReaction>
</comment>
<comment type="catalytic activity">
    <reaction evidence="6">
        <text>pentanoate ester + H2O = pentanoate + an aliphatic alcohol + H(+)</text>
        <dbReference type="Rhea" id="RHEA:48436"/>
        <dbReference type="ChEBI" id="CHEBI:2571"/>
        <dbReference type="ChEBI" id="CHEBI:15377"/>
        <dbReference type="ChEBI" id="CHEBI:15378"/>
        <dbReference type="ChEBI" id="CHEBI:31011"/>
        <dbReference type="ChEBI" id="CHEBI:50871"/>
    </reaction>
    <physiologicalReaction direction="left-to-right" evidence="6">
        <dbReference type="Rhea" id="RHEA:48437"/>
    </physiologicalReaction>
</comment>
<comment type="catalytic activity">
    <reaction evidence="6 7">
        <text>a hexanoate ester + H2O = an aliphatic alcohol + hexanoate + H(+)</text>
        <dbReference type="Rhea" id="RHEA:47352"/>
        <dbReference type="ChEBI" id="CHEBI:2571"/>
        <dbReference type="ChEBI" id="CHEBI:15377"/>
        <dbReference type="ChEBI" id="CHEBI:15378"/>
        <dbReference type="ChEBI" id="CHEBI:17120"/>
        <dbReference type="ChEBI" id="CHEBI:87656"/>
    </reaction>
    <physiologicalReaction direction="left-to-right" evidence="6 7">
        <dbReference type="Rhea" id="RHEA:47353"/>
    </physiologicalReaction>
</comment>
<comment type="catalytic activity">
    <reaction evidence="6 7">
        <text>an octanoate ester + H2O = an aliphatic alcohol + octanoate + H(+)</text>
        <dbReference type="Rhea" id="RHEA:47356"/>
        <dbReference type="ChEBI" id="CHEBI:2571"/>
        <dbReference type="ChEBI" id="CHEBI:15377"/>
        <dbReference type="ChEBI" id="CHEBI:15378"/>
        <dbReference type="ChEBI" id="CHEBI:25646"/>
        <dbReference type="ChEBI" id="CHEBI:87657"/>
    </reaction>
    <physiologicalReaction direction="left-to-right" evidence="6 7">
        <dbReference type="Rhea" id="RHEA:47357"/>
    </physiologicalReaction>
</comment>
<comment type="catalytic activity">
    <reaction evidence="6">
        <text>decanoate ester + H2O = decanoate + an aliphatic alcohol + H(+)</text>
        <dbReference type="Rhea" id="RHEA:47360"/>
        <dbReference type="ChEBI" id="CHEBI:2571"/>
        <dbReference type="ChEBI" id="CHEBI:15377"/>
        <dbReference type="ChEBI" id="CHEBI:15378"/>
        <dbReference type="ChEBI" id="CHEBI:27689"/>
        <dbReference type="ChEBI" id="CHEBI:87658"/>
    </reaction>
    <physiologicalReaction direction="left-to-right" evidence="6">
        <dbReference type="Rhea" id="RHEA:47361"/>
    </physiologicalReaction>
</comment>
<comment type="catalytic activity">
    <reaction evidence="5">
        <text>a dodecanoate ester + H2O = an aliphatic alcohol + dodecanoate + H(+)</text>
        <dbReference type="Rhea" id="RHEA:47364"/>
        <dbReference type="ChEBI" id="CHEBI:2571"/>
        <dbReference type="ChEBI" id="CHEBI:15377"/>
        <dbReference type="ChEBI" id="CHEBI:15378"/>
        <dbReference type="ChEBI" id="CHEBI:18262"/>
        <dbReference type="ChEBI" id="CHEBI:87659"/>
    </reaction>
    <physiologicalReaction direction="left-to-right" evidence="5">
        <dbReference type="Rhea" id="RHEA:47365"/>
    </physiologicalReaction>
</comment>
<comment type="catalytic activity">
    <reaction evidence="5">
        <text>a tetradecanoate ester + H2O = an aliphatic alcohol + tetradecanoate + H(+)</text>
        <dbReference type="Rhea" id="RHEA:47388"/>
        <dbReference type="ChEBI" id="CHEBI:2571"/>
        <dbReference type="ChEBI" id="CHEBI:15377"/>
        <dbReference type="ChEBI" id="CHEBI:15378"/>
        <dbReference type="ChEBI" id="CHEBI:30807"/>
        <dbReference type="ChEBI" id="CHEBI:87691"/>
    </reaction>
    <physiologicalReaction direction="left-to-right" evidence="5">
        <dbReference type="Rhea" id="RHEA:47389"/>
    </physiologicalReaction>
</comment>
<comment type="catalytic activity">
    <reaction evidence="6">
        <text>octanoylglycerol + H2O = octanoate + glycerol + H(+)</text>
        <dbReference type="Rhea" id="RHEA:48500"/>
        <dbReference type="ChEBI" id="CHEBI:15377"/>
        <dbReference type="ChEBI" id="CHEBI:15378"/>
        <dbReference type="ChEBI" id="CHEBI:17754"/>
        <dbReference type="ChEBI" id="CHEBI:25646"/>
        <dbReference type="ChEBI" id="CHEBI:88070"/>
    </reaction>
    <physiologicalReaction direction="left-to-right" evidence="6">
        <dbReference type="Rhea" id="RHEA:48501"/>
    </physiologicalReaction>
</comment>
<comment type="activity regulation">
    <text evidence="5 6">Almost completely inhibited by paraoxon (PubMed:19225166). Inhibited by tetrahydrolipstatin (THL), a specific lipase inhibitor (PubMed:20103719).</text>
</comment>
<comment type="biophysicochemical properties">
    <phDependence>
        <text evidence="6">Optimum pH is 7.5.</text>
    </phDependence>
    <temperatureDependence>
        <text evidence="6">Optimum temperature is 37 degrees Celsius.</text>
    </temperatureDependence>
</comment>
<comment type="subcellular location">
    <subcellularLocation>
        <location evidence="5 9">Secreted</location>
    </subcellularLocation>
</comment>
<comment type="miscellaneous">
    <text evidence="8">Circulating B cells able to spontaneously generate specific antibodies directed against Culp1 are detected during active tuberculosis and in some latent-tuberculosis cases.</text>
</comment>
<comment type="similarity">
    <text evidence="12">Belongs to the cutinase family.</text>
</comment>
<organism>
    <name type="scientific">Mycobacterium tuberculosis (strain ATCC 25618 / H37Rv)</name>
    <dbReference type="NCBI Taxonomy" id="83332"/>
    <lineage>
        <taxon>Bacteria</taxon>
        <taxon>Bacillati</taxon>
        <taxon>Actinomycetota</taxon>
        <taxon>Actinomycetes</taxon>
        <taxon>Mycobacteriales</taxon>
        <taxon>Mycobacteriaceae</taxon>
        <taxon>Mycobacterium</taxon>
        <taxon>Mycobacterium tuberculosis complex</taxon>
    </lineage>
</organism>
<accession>P9WP43</accession>
<accession>L0TB60</accession>
<accession>P63879</accession>
<accession>Q10837</accession>
<proteinExistence type="evidence at protein level"/>
<evidence type="ECO:0000250" key="1">
    <source>
        <dbReference type="UniProtKB" id="O53581"/>
    </source>
</evidence>
<evidence type="ECO:0000250" key="2">
    <source>
        <dbReference type="UniProtKB" id="P00590"/>
    </source>
</evidence>
<evidence type="ECO:0000269" key="3">
    <source>
    </source>
</evidence>
<evidence type="ECO:0000269" key="4">
    <source>
    </source>
</evidence>
<evidence type="ECO:0000269" key="5">
    <source>
    </source>
</evidence>
<evidence type="ECO:0000269" key="6">
    <source>
    </source>
</evidence>
<evidence type="ECO:0000269" key="7">
    <source>
    </source>
</evidence>
<evidence type="ECO:0000269" key="8">
    <source>
    </source>
</evidence>
<evidence type="ECO:0000269" key="9">
    <source>
    </source>
</evidence>
<evidence type="ECO:0000303" key="10">
    <source>
    </source>
</evidence>
<evidence type="ECO:0000303" key="11">
    <source>
    </source>
</evidence>
<evidence type="ECO:0000305" key="12"/>
<evidence type="ECO:0000305" key="13">
    <source>
    </source>
</evidence>
<feature type="signal peptide" evidence="9">
    <location>
        <begin position="1"/>
        <end position="32"/>
    </location>
</feature>
<feature type="chain" id="PRO_0000006447" description="Carboxylesterase Culp1">
    <location>
        <begin position="33"/>
        <end position="217"/>
    </location>
</feature>
<feature type="active site" description="Nucleophile" evidence="13">
    <location>
        <position position="118"/>
    </location>
</feature>
<feature type="active site" evidence="13">
    <location>
        <position position="181"/>
    </location>
</feature>
<feature type="active site" description="Proton donor/acceptor" evidence="13">
    <location>
        <position position="193"/>
    </location>
</feature>
<feature type="site" description="Transition state stabilizer" evidence="2">
    <location>
        <position position="119"/>
    </location>
</feature>
<feature type="disulfide bond" evidence="1">
    <location>
        <begin position="35"/>
        <end position="107"/>
    </location>
</feature>
<feature type="disulfide bond" evidence="1">
    <location>
        <begin position="177"/>
        <end position="184"/>
    </location>
</feature>
<feature type="mutagenesis site" description="Shows a strong preference for substrates with a medium chain length ranging between 6 and 8 carbon atoms. 31% and 25% decrease in activity with 6 carbon atoms vinyl esters (VC6) or 8 carbon atoms vinyl esters (VC8) as substrates. Enhances lipase activity on triglycerides. Acquires phospholipase A activity and shows cytotoxic effects on macrophages." evidence="7">
    <original>D</original>
    <variation>R</variation>
    <location>
        <position position="54"/>
    </location>
</feature>
<feature type="mutagenesis site" description="Shows a strong preference for substrates with a medium chain length ranging between 6 and 8 carbon atoms. 17-18% increase in activity with VC6 or VC8 as substrates. Acquires phospholipase A activity and shows cytotoxic effects on macrophages." evidence="7">
    <original>DDYR</original>
    <variation>GDFL</variation>
    <location>
        <begin position="83"/>
        <end position="86"/>
    </location>
</feature>
<feature type="mutagenesis site" description="Loss of activity." evidence="6">
    <original>S</original>
    <variation>A</variation>
    <location>
        <position position="118"/>
    </location>
</feature>
<feature type="mutagenesis site" description="30% decrease in activity with pNP-octanoate and vinyl-caprylate as substrates." evidence="6">
    <original>D</original>
    <variation>A</variation>
    <location>
        <position position="180"/>
    </location>
</feature>
<feature type="mutagenesis site" description="Loss of activity." evidence="6">
    <original>D</original>
    <variation>A</variation>
    <location>
        <position position="181"/>
    </location>
</feature>
<feature type="mutagenesis site" description="Shows a strong preference for substrates with a medium chain length ranging between 6 and 8 carbon atoms. Loses 99% and 80% of activity with VC6 or VC8 as substrates. Loss of lipase activity." evidence="7">
    <original>NIM</original>
    <variation>RWR</variation>
    <location>
        <begin position="189"/>
        <end position="191"/>
    </location>
</feature>
<feature type="mutagenesis site" description="Loss of activity." evidence="6">
    <original>H</original>
    <variation>A</variation>
    <location>
        <position position="193"/>
    </location>
</feature>
<sequence>MTPRSLVRIVGVVVATTLALVSAPAGGRAAHADPCSDIAVVFARGTHQASGLGDVGEAFVDSLTSQVGGRSIGVYAVNYPASDDYRASASNGSDDASAHIQRTVASCPNTRIVLGGYSQGATVIDLSTSAMPPAVADHVAAVALFGEPSSGFSSMLWGGGSLPTIGPLYSSKTINLCAPDDPICTGGGNIMAHVSYVQSGMTSQAATFAANRLDHAG</sequence>
<keyword id="KW-0903">Direct protein sequencing</keyword>
<keyword id="KW-1015">Disulfide bond</keyword>
<keyword id="KW-0378">Hydrolase</keyword>
<keyword id="KW-1185">Reference proteome</keyword>
<keyword id="KW-0964">Secreted</keyword>
<keyword id="KW-0719">Serine esterase</keyword>
<keyword id="KW-0732">Signal</keyword>
<keyword id="KW-0843">Virulence</keyword>
<reference key="1">
    <citation type="journal article" date="1998" name="Nature">
        <title>Deciphering the biology of Mycobacterium tuberculosis from the complete genome sequence.</title>
        <authorList>
            <person name="Cole S.T."/>
            <person name="Brosch R."/>
            <person name="Parkhill J."/>
            <person name="Garnier T."/>
            <person name="Churcher C.M."/>
            <person name="Harris D.E."/>
            <person name="Gordon S.V."/>
            <person name="Eiglmeier K."/>
            <person name="Gas S."/>
            <person name="Barry C.E. III"/>
            <person name="Tekaia F."/>
            <person name="Badcock K."/>
            <person name="Basham D."/>
            <person name="Brown D."/>
            <person name="Chillingworth T."/>
            <person name="Connor R."/>
            <person name="Davies R.M."/>
            <person name="Devlin K."/>
            <person name="Feltwell T."/>
            <person name="Gentles S."/>
            <person name="Hamlin N."/>
            <person name="Holroyd S."/>
            <person name="Hornsby T."/>
            <person name="Jagels K."/>
            <person name="Krogh A."/>
            <person name="McLean J."/>
            <person name="Moule S."/>
            <person name="Murphy L.D."/>
            <person name="Oliver S."/>
            <person name="Osborne J."/>
            <person name="Quail M.A."/>
            <person name="Rajandream M.A."/>
            <person name="Rogers J."/>
            <person name="Rutter S."/>
            <person name="Seeger K."/>
            <person name="Skelton S."/>
            <person name="Squares S."/>
            <person name="Squares R."/>
            <person name="Sulston J.E."/>
            <person name="Taylor K."/>
            <person name="Whitehead S."/>
            <person name="Barrell B.G."/>
        </authorList>
    </citation>
    <scope>NUCLEOTIDE SEQUENCE [LARGE SCALE GENOMIC DNA]</scope>
    <source>
        <strain>ATCC 25618 / H37Rv</strain>
    </source>
</reference>
<reference key="2">
    <citation type="journal article" date="1998" name="Infect. Immun.">
        <title>Two-dimensional electrophoresis for analysis of Mycobacterium tuberculosis culture filtrate and purification and characterization of six novel proteins.</title>
        <authorList>
            <person name="Weldingh K."/>
            <person name="Rosenkrands I."/>
            <person name="Jacobsen S."/>
            <person name="Rasmussen P.B."/>
            <person name="Elhay M.J."/>
            <person name="Andersen P."/>
        </authorList>
    </citation>
    <scope>PROTEIN SEQUENCE OF 33-47</scope>
    <scope>FUNCTION</scope>
    <scope>SUBCELLULAR LOCATION</scope>
    <source>
        <strain>H37Rv</strain>
    </source>
</reference>
<reference key="3">
    <citation type="journal article" date="1999" name="FEMS Immunol. Med. Microbiol.">
        <title>Immunological evaluation of novel Mycobacterium tuberculosis culture filtrate proteins.</title>
        <authorList>
            <person name="Weldingh K."/>
            <person name="Andersen P."/>
        </authorList>
    </citation>
    <scope>FUNCTION</scope>
</reference>
<reference key="4">
    <citation type="journal article" date="2006" name="Protein Expr. Purif.">
        <title>Expression and purification of the Mycobacterium tuberculosis complex-restricted antigen CFP21 to study its immunoprophylactic potential in mouse model.</title>
        <authorList>
            <person name="Grover A."/>
            <person name="Ahmed M.F."/>
            <person name="Verma I."/>
            <person name="Sharma P."/>
            <person name="Khuller G.K."/>
        </authorList>
    </citation>
    <scope>FUNCTION</scope>
    <scope>CATALYTIC ACTIVITY</scope>
</reference>
<reference key="5">
    <citation type="journal article" date="2009" name="FASEB J.">
        <title>Cutinase-like proteins of Mycobacterium tuberculosis: characterization of their variable enzymatic functions and active site identification.</title>
        <authorList>
            <person name="West N.P."/>
            <person name="Chow F.M."/>
            <person name="Randall E.J."/>
            <person name="Wu J."/>
            <person name="Chen J."/>
            <person name="Ribeiro J.M."/>
            <person name="Britton W.J."/>
        </authorList>
    </citation>
    <scope>FUNCTION</scope>
    <scope>CATALYTIC ACTIVITY</scope>
    <scope>ACTIVITY REGULATION</scope>
    <scope>SUBCELLULAR LOCATION</scope>
    <source>
        <strain>H37Rv</strain>
    </source>
</reference>
<reference key="6">
    <citation type="journal article" date="2010" name="FASEB J.">
        <title>Two cutinase-like proteins secreted by Mycobacterium tuberculosis show very different lipolytic activities reflecting their physiological function.</title>
        <authorList>
            <person name="Schue M."/>
            <person name="Maurin D."/>
            <person name="Dhouib R."/>
            <person name="Bakala N'Goma J.C."/>
            <person name="Delorme V."/>
            <person name="Lambeau G."/>
            <person name="Carriere F."/>
            <person name="Canaan S."/>
        </authorList>
    </citation>
    <scope>FUNCTION</scope>
    <scope>CATALYTIC ACTIVITY</scope>
    <scope>ACTIVITY REGULATION</scope>
    <scope>BIOPHYSICOCHEMICAL PROPERTIES</scope>
    <scope>MUTAGENESIS OF SER-118; ASP-180; ASP-181 AND HIS-193</scope>
    <scope>ACTIVE SITE</scope>
</reference>
<reference key="7">
    <citation type="journal article" date="2011" name="Mol. Cell. Proteomics">
        <title>Proteogenomic analysis of Mycobacterium tuberculosis by high resolution mass spectrometry.</title>
        <authorList>
            <person name="Kelkar D.S."/>
            <person name="Kumar D."/>
            <person name="Kumar P."/>
            <person name="Balakrishnan L."/>
            <person name="Muthusamy B."/>
            <person name="Yadav A.K."/>
            <person name="Shrivastava P."/>
            <person name="Marimuthu A."/>
            <person name="Anand S."/>
            <person name="Sundaram H."/>
            <person name="Kingsbury R."/>
            <person name="Harsha H.C."/>
            <person name="Nair B."/>
            <person name="Prasad T.S."/>
            <person name="Chauhan D.S."/>
            <person name="Katoch K."/>
            <person name="Katoch V.M."/>
            <person name="Kumar P."/>
            <person name="Chaerkady R."/>
            <person name="Ramachandran S."/>
            <person name="Dash D."/>
            <person name="Pandey A."/>
        </authorList>
    </citation>
    <scope>IDENTIFICATION BY MASS SPECTROMETRY [LARGE SCALE ANALYSIS]</scope>
    <source>
        <strain>ATCC 25618 / H37Rv</strain>
    </source>
</reference>
<reference key="8">
    <citation type="journal article" date="2013" name="PLoS ONE">
        <title>Identification of residues involved in substrate specificity and cytotoxicity of two closely related cutinases from Mycobacterium tuberculosis.</title>
        <authorList>
            <person name="Dedieu L."/>
            <person name="Serveau-Avesque C."/>
            <person name="Canaan S."/>
        </authorList>
    </citation>
    <scope>FUNCTION</scope>
    <scope>CATALYTIC ACTIVITY</scope>
    <scope>MUTAGENESIS OF ASP-54; 83-ASP--ARG-86 AND 189-ASN--MET-191</scope>
</reference>
<reference key="9">
    <citation type="journal article" date="2018" name="PLoS ONE">
        <title>B cells response directed against Cut4 and CFP21 lipolytic enzymes in active and latent tuberculosis infections.</title>
        <authorList>
            <person name="Renier W."/>
            <person name="Bourdin A."/>
            <person name="Rubbo P.A."/>
            <person name="Peries M."/>
            <person name="Dedieu L."/>
            <person name="Bendriss S."/>
            <person name="Kremer L."/>
            <person name="Canaan S."/>
            <person name="Terru D."/>
            <person name="Godreuil S."/>
            <person name="Nagot N."/>
            <person name="Van de Perre P."/>
            <person name="Tuaillon E."/>
        </authorList>
    </citation>
    <scope>IMMUNOGENICITY</scope>
</reference>